<gene>
    <name type="primary">LGI1</name>
</gene>
<reference key="1">
    <citation type="submission" date="2004-11" db="EMBL/GenBank/DDBJ databases">
        <authorList>
            <consortium name="The German cDNA consortium"/>
        </authorList>
    </citation>
    <scope>NUCLEOTIDE SEQUENCE [LARGE SCALE MRNA]</scope>
    <source>
        <tissue>Brain cortex</tissue>
    </source>
</reference>
<evidence type="ECO:0000250" key="1"/>
<evidence type="ECO:0000250" key="2">
    <source>
        <dbReference type="UniProtKB" id="Q8K4Y5"/>
    </source>
</evidence>
<evidence type="ECO:0000250" key="3">
    <source>
        <dbReference type="UniProtKB" id="Q9JIA1"/>
    </source>
</evidence>
<evidence type="ECO:0000255" key="4"/>
<evidence type="ECO:0000255" key="5">
    <source>
        <dbReference type="PROSITE-ProRule" id="PRU00075"/>
    </source>
</evidence>
<sequence length="557" mass="63728">MESERSKRMGNACIPLKRIAYFLCLLSALLLTEGKKPAKPKCPAVCTCTKDNALCENARSIPRTVPPDVISLSFVRSGFTEISEGGFLFTPSLQLLLFTSNSFDVISDDAFIGLPHLEYLFIENNNIKSISRHTFRGLKSLIHLSLANNNLQTLPKDIFKGLDSLTNVDLRGNSFNCDCKLKWLVEWLGHTNATVEDIYCEGPPEYKKRKINSLSSKDFDCIITEFAKSQDLPYQSLSIDTFSYLNDEYVVIAQPFTGKCIFLEWDHVEKTFRNYDNITGTSTVVCKPIVIETQLYVIVAQLFGGSHIYKRDSFANKFIKIQDIEILKIRKPNDIETFKIENNWYFVVADSSKAGFTTIYKWNGNGFYSHQSLHAWYRDTDVEYLEIVRTPQTLRTPHLILSSSSQRPVIYQWNKATQLFTNQTDIPNMEDVYAVKHFSVKGDVYICLTRFIGDSKVMKWGGSSFQDIQRMPSRGSMVFQPLQINNYQYAILGSDYSFTQVYNWDAEKAKFVKFQELNVQAPRSFTHVSINKRNFLFASSFKGNTQICKHVIVDLSA</sequence>
<name>LGI1_PONAB</name>
<comment type="function">
    <text evidence="1">Regulates voltage-gated potassium channels assembled from KCNA1, KCNA4 and KCNAB1. It slows down channel inactivation by precluding channel closure mediated by the KCNAB1 subunit. Ligand for ADAM22 that positively regulates synaptic transmission mediated by AMPA-type glutamate receptors. Plays a role in suppressing the production of MMP1/3 through the phosphatidylinositol 3-kinase/ERK pathway (By similarity).</text>
</comment>
<comment type="subunit">
    <text evidence="1">Oligomer. Interacts with KCNA1 within a complex containing KCNA1, KCNA4 and KCNAB1. Part of a complex containing ADAM22, DLG4/PSD95 and CACNG2 (stargazin). Can bind to ADAM11 and ADAM23.</text>
</comment>
<comment type="subcellular location">
    <subcellularLocation>
        <location evidence="3">Secreted</location>
    </subcellularLocation>
    <subcellularLocation>
        <location evidence="2">Synapse</location>
    </subcellularLocation>
    <subcellularLocation>
        <location evidence="3">Cytoplasm</location>
    </subcellularLocation>
</comment>
<comment type="PTM">
    <text evidence="1">Glycosylated.</text>
</comment>
<organism>
    <name type="scientific">Pongo abelii</name>
    <name type="common">Sumatran orangutan</name>
    <name type="synonym">Pongo pygmaeus abelii</name>
    <dbReference type="NCBI Taxonomy" id="9601"/>
    <lineage>
        <taxon>Eukaryota</taxon>
        <taxon>Metazoa</taxon>
        <taxon>Chordata</taxon>
        <taxon>Craniata</taxon>
        <taxon>Vertebrata</taxon>
        <taxon>Euteleostomi</taxon>
        <taxon>Mammalia</taxon>
        <taxon>Eutheria</taxon>
        <taxon>Euarchontoglires</taxon>
        <taxon>Primates</taxon>
        <taxon>Haplorrhini</taxon>
        <taxon>Catarrhini</taxon>
        <taxon>Hominidae</taxon>
        <taxon>Pongo</taxon>
    </lineage>
</organism>
<proteinExistence type="evidence at transcript level"/>
<accession>Q5R945</accession>
<dbReference type="EMBL" id="CR859550">
    <property type="protein sequence ID" value="CAH91715.1"/>
    <property type="molecule type" value="mRNA"/>
</dbReference>
<dbReference type="RefSeq" id="NP_001125996.1">
    <property type="nucleotide sequence ID" value="NM_001132524.1"/>
</dbReference>
<dbReference type="SMR" id="Q5R945"/>
<dbReference type="FunCoup" id="Q5R945">
    <property type="interactions" value="209"/>
</dbReference>
<dbReference type="STRING" id="9601.ENSPPYP00000002892"/>
<dbReference type="GlyCosmos" id="Q5R945">
    <property type="glycosylation" value="3 sites, No reported glycans"/>
</dbReference>
<dbReference type="GeneID" id="100172937"/>
<dbReference type="KEGG" id="pon:100172937"/>
<dbReference type="CTD" id="9211"/>
<dbReference type="eggNOG" id="ENOG502REXX">
    <property type="taxonomic scope" value="Eukaryota"/>
</dbReference>
<dbReference type="InParanoid" id="Q5R945"/>
<dbReference type="OrthoDB" id="6066926at2759"/>
<dbReference type="Proteomes" id="UP000001595">
    <property type="component" value="Unplaced"/>
</dbReference>
<dbReference type="GO" id="GO:0005737">
    <property type="term" value="C:cytoplasm"/>
    <property type="evidence" value="ECO:0000250"/>
    <property type="project" value="UniProtKB"/>
</dbReference>
<dbReference type="GO" id="GO:0005615">
    <property type="term" value="C:extracellular space"/>
    <property type="evidence" value="ECO:0000250"/>
    <property type="project" value="UniProtKB"/>
</dbReference>
<dbReference type="GO" id="GO:0045202">
    <property type="term" value="C:synapse"/>
    <property type="evidence" value="ECO:0007669"/>
    <property type="project" value="UniProtKB-SubCell"/>
</dbReference>
<dbReference type="GO" id="GO:0048018">
    <property type="term" value="F:receptor ligand activity"/>
    <property type="evidence" value="ECO:0000250"/>
    <property type="project" value="UniProtKB"/>
</dbReference>
<dbReference type="GO" id="GO:0050806">
    <property type="term" value="P:positive regulation of synaptic transmission"/>
    <property type="evidence" value="ECO:0000250"/>
    <property type="project" value="UniProtKB"/>
</dbReference>
<dbReference type="FunFam" id="3.80.10.10:FF:000017">
    <property type="entry name" value="leucine-rich repeat LGI family member 3"/>
    <property type="match status" value="1"/>
</dbReference>
<dbReference type="Gene3D" id="3.80.10.10">
    <property type="entry name" value="Ribonuclease Inhibitor"/>
    <property type="match status" value="1"/>
</dbReference>
<dbReference type="InterPro" id="IPR000483">
    <property type="entry name" value="Cys-rich_flank_reg_C"/>
</dbReference>
<dbReference type="InterPro" id="IPR009039">
    <property type="entry name" value="EAR"/>
</dbReference>
<dbReference type="InterPro" id="IPR005492">
    <property type="entry name" value="EPTP"/>
</dbReference>
<dbReference type="InterPro" id="IPR001611">
    <property type="entry name" value="Leu-rich_rpt"/>
</dbReference>
<dbReference type="InterPro" id="IPR003591">
    <property type="entry name" value="Leu-rich_rpt_typical-subtyp"/>
</dbReference>
<dbReference type="InterPro" id="IPR051295">
    <property type="entry name" value="LGI_related"/>
</dbReference>
<dbReference type="InterPro" id="IPR032675">
    <property type="entry name" value="LRR_dom_sf"/>
</dbReference>
<dbReference type="PANTHER" id="PTHR24367:SF17">
    <property type="entry name" value="LEUCINE-RICH GLIOMA-INACTIVATED PROTEIN 1"/>
    <property type="match status" value="1"/>
</dbReference>
<dbReference type="PANTHER" id="PTHR24367">
    <property type="entry name" value="LEUCINE-RICH REPEAT-CONTAINING PROTEIN"/>
    <property type="match status" value="1"/>
</dbReference>
<dbReference type="Pfam" id="PF03736">
    <property type="entry name" value="EPTP"/>
    <property type="match status" value="7"/>
</dbReference>
<dbReference type="Pfam" id="PF13855">
    <property type="entry name" value="LRR_8"/>
    <property type="match status" value="1"/>
</dbReference>
<dbReference type="SMART" id="SM00369">
    <property type="entry name" value="LRR_TYP"/>
    <property type="match status" value="3"/>
</dbReference>
<dbReference type="SMART" id="SM00082">
    <property type="entry name" value="LRRCT"/>
    <property type="match status" value="1"/>
</dbReference>
<dbReference type="SUPFAM" id="SSF52058">
    <property type="entry name" value="L domain-like"/>
    <property type="match status" value="1"/>
</dbReference>
<dbReference type="PROSITE" id="PS50912">
    <property type="entry name" value="EAR"/>
    <property type="match status" value="7"/>
</dbReference>
<keyword id="KW-0963">Cytoplasm</keyword>
<keyword id="KW-0325">Glycoprotein</keyword>
<keyword id="KW-0433">Leucine-rich repeat</keyword>
<keyword id="KW-1185">Reference proteome</keyword>
<keyword id="KW-0677">Repeat</keyword>
<keyword id="KW-0964">Secreted</keyword>
<keyword id="KW-0732">Signal</keyword>
<keyword id="KW-0770">Synapse</keyword>
<protein>
    <recommendedName>
        <fullName>Leucine-rich glioma-inactivated protein 1</fullName>
    </recommendedName>
</protein>
<feature type="signal peptide" evidence="4">
    <location>
        <begin position="1"/>
        <end position="34"/>
    </location>
</feature>
<feature type="chain" id="PRO_0000251156" description="Leucine-rich glioma-inactivated protein 1">
    <location>
        <begin position="35"/>
        <end position="557"/>
    </location>
</feature>
<feature type="domain" description="LRRNT">
    <location>
        <begin position="35"/>
        <end position="72"/>
    </location>
</feature>
<feature type="repeat" description="LRR 1">
    <location>
        <begin position="92"/>
        <end position="113"/>
    </location>
</feature>
<feature type="repeat" description="LRR 2">
    <location>
        <begin position="116"/>
        <end position="137"/>
    </location>
</feature>
<feature type="repeat" description="LRR 3">
    <location>
        <begin position="140"/>
        <end position="161"/>
    </location>
</feature>
<feature type="domain" description="LRRCT">
    <location>
        <begin position="173"/>
        <end position="223"/>
    </location>
</feature>
<feature type="repeat" description="EAR 1" evidence="5">
    <location>
        <begin position="225"/>
        <end position="267"/>
    </location>
</feature>
<feature type="repeat" description="EAR 2" evidence="5">
    <location>
        <begin position="271"/>
        <end position="313"/>
    </location>
</feature>
<feature type="repeat" description="EAR 3" evidence="5">
    <location>
        <begin position="317"/>
        <end position="364"/>
    </location>
</feature>
<feature type="repeat" description="EAR 4" evidence="5">
    <location>
        <begin position="366"/>
        <end position="415"/>
    </location>
</feature>
<feature type="repeat" description="EAR 5" evidence="5">
    <location>
        <begin position="419"/>
        <end position="462"/>
    </location>
</feature>
<feature type="repeat" description="EAR 6" evidence="5">
    <location>
        <begin position="464"/>
        <end position="506"/>
    </location>
</feature>
<feature type="repeat" description="EAR 7" evidence="5">
    <location>
        <begin position="510"/>
        <end position="552"/>
    </location>
</feature>
<feature type="glycosylation site" description="N-linked (GlcNAc...) asparagine" evidence="4">
    <location>
        <position position="192"/>
    </location>
</feature>
<feature type="glycosylation site" description="N-linked (GlcNAc...) asparagine" evidence="4">
    <location>
        <position position="277"/>
    </location>
</feature>
<feature type="glycosylation site" description="N-linked (GlcNAc...) asparagine" evidence="4">
    <location>
        <position position="422"/>
    </location>
</feature>